<reference evidence="7" key="1">
    <citation type="journal article" date="1998" name="Science">
        <title>Genome sequence of the nematode C. elegans: a platform for investigating biology.</title>
        <authorList>
            <consortium name="The C. elegans sequencing consortium"/>
        </authorList>
    </citation>
    <scope>NUCLEOTIDE SEQUENCE [LARGE SCALE GENOMIC DNA]</scope>
    <source>
        <strain evidence="7">Bristol N2</strain>
    </source>
</reference>
<reference evidence="6" key="2">
    <citation type="journal article" date="2002" name="Curr. Biol.">
        <title>Inducible antibacterial defense system in C. elegans.</title>
        <authorList>
            <person name="Mallo G.V."/>
            <person name="Kurz C.L."/>
            <person name="Couillault C."/>
            <person name="Pujol N."/>
            <person name="Granjeaud S."/>
            <person name="Kohara Y."/>
            <person name="Ewbank J.J."/>
        </authorList>
    </citation>
    <scope>FUNCTION</scope>
    <scope>SUBCELLULAR LOCATION</scope>
    <scope>TISSUE SPECIFICITY</scope>
    <scope>INDUCTION</scope>
</reference>
<reference evidence="6" key="3">
    <citation type="journal article" date="2010" name="PLoS ONE">
        <title>RNAi screen of DAF-16/FOXO target genes in C. elegans links pathogenesis and dauer formation.</title>
        <authorList>
            <person name="Jensen V.L."/>
            <person name="Simonsen K.T."/>
            <person name="Lee Y.H."/>
            <person name="Park D."/>
            <person name="Riddle D.L."/>
        </authorList>
    </citation>
    <scope>FUNCTION</scope>
    <scope>DISRUPTION PHENOTYPE</scope>
</reference>
<reference evidence="6" key="4">
    <citation type="journal article" date="2011" name="PLoS ONE">
        <title>Protist-type lysozymes of the nematode Caenorhabditis elegans contribute to resistance against pathogenic Bacillus thuringiensis.</title>
        <authorList>
            <person name="Boehnisch C."/>
            <person name="Wong D."/>
            <person name="Habig M."/>
            <person name="Isermann K."/>
            <person name="Michiels N.K."/>
            <person name="Roeder T."/>
            <person name="May R.C."/>
            <person name="Schulenburg H."/>
        </authorList>
    </citation>
    <scope>INDUCTION</scope>
</reference>
<keyword id="KW-0929">Antimicrobial</keyword>
<keyword id="KW-0968">Cytoplasmic vesicle</keyword>
<keyword id="KW-0391">Immunity</keyword>
<keyword id="KW-0399">Innate immunity</keyword>
<keyword id="KW-1185">Reference proteome</keyword>
<keyword id="KW-0732">Signal</keyword>
<evidence type="ECO:0000255" key="1"/>
<evidence type="ECO:0000255" key="2">
    <source>
        <dbReference type="PROSITE-ProRule" id="PRU01252"/>
    </source>
</evidence>
<evidence type="ECO:0000269" key="3">
    <source>
    </source>
</evidence>
<evidence type="ECO:0000269" key="4">
    <source>
    </source>
</evidence>
<evidence type="ECO:0000269" key="5">
    <source>
    </source>
</evidence>
<evidence type="ECO:0000305" key="6"/>
<evidence type="ECO:0000312" key="7">
    <source>
        <dbReference type="Proteomes" id="UP000001940"/>
    </source>
</evidence>
<evidence type="ECO:0000312" key="8">
    <source>
        <dbReference type="WormBase" id="Y22F5A.4"/>
    </source>
</evidence>
<protein>
    <recommendedName>
        <fullName evidence="6">Lysozyme-like protein 1</fullName>
    </recommendedName>
</protein>
<proteinExistence type="evidence at transcript level"/>
<dbReference type="EMBL" id="BX284605">
    <property type="protein sequence ID" value="CAA16323.1"/>
    <property type="molecule type" value="Genomic_DNA"/>
</dbReference>
<dbReference type="PIR" id="T26554">
    <property type="entry name" value="T26554"/>
</dbReference>
<dbReference type="RefSeq" id="NP_505642.1">
    <property type="nucleotide sequence ID" value="NM_073241.7"/>
</dbReference>
<dbReference type="SMR" id="O62415"/>
<dbReference type="DIP" id="DIP-26293N"/>
<dbReference type="FunCoup" id="O62415">
    <property type="interactions" value="123"/>
</dbReference>
<dbReference type="IntAct" id="O62415">
    <property type="interactions" value="5"/>
</dbReference>
<dbReference type="STRING" id="6239.Y22F5A.4.2"/>
<dbReference type="CAZy" id="GH25">
    <property type="family name" value="Glycoside Hydrolase Family 25"/>
</dbReference>
<dbReference type="PaxDb" id="6239-Y22F5A.4.2"/>
<dbReference type="PeptideAtlas" id="O62415"/>
<dbReference type="EnsemblMetazoa" id="Y22F5A.4.1">
    <property type="protein sequence ID" value="Y22F5A.4.1"/>
    <property type="gene ID" value="WBGene00003090"/>
</dbReference>
<dbReference type="GeneID" id="179428"/>
<dbReference type="KEGG" id="cel:CELE_Y22F5A.4"/>
<dbReference type="UCSC" id="Y22F5A.4.1">
    <property type="organism name" value="c. elegans"/>
</dbReference>
<dbReference type="AGR" id="WB:WBGene00003090"/>
<dbReference type="CTD" id="179428"/>
<dbReference type="WormBase" id="Y22F5A.4">
    <property type="protein sequence ID" value="CE16605"/>
    <property type="gene ID" value="WBGene00003090"/>
    <property type="gene designation" value="lys-1"/>
</dbReference>
<dbReference type="eggNOG" id="ENOG502S5RB">
    <property type="taxonomic scope" value="Eukaryota"/>
</dbReference>
<dbReference type="GeneTree" id="ENSGT00970000195882"/>
<dbReference type="HOGENOM" id="CLU_073372_1_0_1"/>
<dbReference type="InParanoid" id="O62415"/>
<dbReference type="OMA" id="TGNWATL"/>
<dbReference type="OrthoDB" id="25039at2759"/>
<dbReference type="PhylomeDB" id="O62415"/>
<dbReference type="PRO" id="PR:O62415"/>
<dbReference type="Proteomes" id="UP000001940">
    <property type="component" value="Chromosome V"/>
</dbReference>
<dbReference type="Bgee" id="WBGene00003090">
    <property type="expression patterns" value="Expressed in larva and 4 other cell types or tissues"/>
</dbReference>
<dbReference type="GO" id="GO:0045177">
    <property type="term" value="C:apical part of cell"/>
    <property type="evidence" value="ECO:0000314"/>
    <property type="project" value="WormBase"/>
</dbReference>
<dbReference type="GO" id="GO:0031410">
    <property type="term" value="C:cytoplasmic vesicle"/>
    <property type="evidence" value="ECO:0000314"/>
    <property type="project" value="WormBase"/>
</dbReference>
<dbReference type="GO" id="GO:0060205">
    <property type="term" value="C:cytoplasmic vesicle lumen"/>
    <property type="evidence" value="ECO:0007669"/>
    <property type="project" value="UniProtKB-SubCell"/>
</dbReference>
<dbReference type="GO" id="GO:0003796">
    <property type="term" value="F:lysozyme activity"/>
    <property type="evidence" value="ECO:0007669"/>
    <property type="project" value="InterPro"/>
</dbReference>
<dbReference type="GO" id="GO:0016998">
    <property type="term" value="P:cell wall macromolecule catabolic process"/>
    <property type="evidence" value="ECO:0007669"/>
    <property type="project" value="InterPro"/>
</dbReference>
<dbReference type="GO" id="GO:0050829">
    <property type="term" value="P:defense response to Gram-negative bacterium"/>
    <property type="evidence" value="ECO:0000270"/>
    <property type="project" value="WormBase"/>
</dbReference>
<dbReference type="GO" id="GO:0050830">
    <property type="term" value="P:defense response to Gram-positive bacterium"/>
    <property type="evidence" value="ECO:0000315"/>
    <property type="project" value="WormBase"/>
</dbReference>
<dbReference type="GO" id="GO:0045087">
    <property type="term" value="P:innate immune response"/>
    <property type="evidence" value="ECO:0000315"/>
    <property type="project" value="WormBase"/>
</dbReference>
<dbReference type="GO" id="GO:0009253">
    <property type="term" value="P:peptidoglycan catabolic process"/>
    <property type="evidence" value="ECO:0007669"/>
    <property type="project" value="InterPro"/>
</dbReference>
<dbReference type="GO" id="GO:0007165">
    <property type="term" value="P:signal transduction"/>
    <property type="evidence" value="ECO:0000318"/>
    <property type="project" value="GO_Central"/>
</dbReference>
<dbReference type="CDD" id="cd06416">
    <property type="entry name" value="GH25_Lys1-like"/>
    <property type="match status" value="1"/>
</dbReference>
<dbReference type="FunFam" id="3.20.20.80:FF:000129">
    <property type="entry name" value="Lysozyme-like protein 7"/>
    <property type="match status" value="1"/>
</dbReference>
<dbReference type="Gene3D" id="3.20.20.80">
    <property type="entry name" value="Glycosidases"/>
    <property type="match status" value="1"/>
</dbReference>
<dbReference type="InterPro" id="IPR051595">
    <property type="entry name" value="GH25_Enzymes"/>
</dbReference>
<dbReference type="InterPro" id="IPR002053">
    <property type="entry name" value="Glyco_hydro_25"/>
</dbReference>
<dbReference type="InterPro" id="IPR017853">
    <property type="entry name" value="Glycoside_hydrolase_SF"/>
</dbReference>
<dbReference type="PANTHER" id="PTHR23208">
    <property type="entry name" value="LYSOZYME PROTEIN"/>
    <property type="match status" value="1"/>
</dbReference>
<dbReference type="PANTHER" id="PTHR23208:SF41">
    <property type="entry name" value="LYSOZYME-LIKE PROTEIN 1"/>
    <property type="match status" value="1"/>
</dbReference>
<dbReference type="SUPFAM" id="SSF51445">
    <property type="entry name" value="(Trans)glycosidases"/>
    <property type="match status" value="1"/>
</dbReference>
<dbReference type="PROSITE" id="PS51904">
    <property type="entry name" value="GLYCOSYL_HYDROL_F25_2"/>
    <property type="match status" value="1"/>
</dbReference>
<gene>
    <name evidence="8" type="primary">lys-1</name>
    <name evidence="8" type="ORF">Y22F5A.4</name>
</gene>
<feature type="signal peptide" evidence="1">
    <location>
        <begin position="1"/>
        <end position="16"/>
    </location>
</feature>
<feature type="chain" id="PRO_5004159237" description="Lysozyme-like protein 1" evidence="1">
    <location>
        <begin position="17"/>
        <end position="298"/>
    </location>
</feature>
<feature type="domain" description="Ch-type lysozyme" evidence="2">
    <location>
        <begin position="59"/>
        <end position="277"/>
    </location>
</feature>
<organism evidence="7">
    <name type="scientific">Caenorhabditis elegans</name>
    <dbReference type="NCBI Taxonomy" id="6239"/>
    <lineage>
        <taxon>Eukaryota</taxon>
        <taxon>Metazoa</taxon>
        <taxon>Ecdysozoa</taxon>
        <taxon>Nematoda</taxon>
        <taxon>Chromadorea</taxon>
        <taxon>Rhabditida</taxon>
        <taxon>Rhabditina</taxon>
        <taxon>Rhabditomorpha</taxon>
        <taxon>Rhabditoidea</taxon>
        <taxon>Rhabditidae</taxon>
        <taxon>Peloderinae</taxon>
        <taxon>Caenorhabditis</taxon>
    </lineage>
</organism>
<sequence>MLKLAFVTFLFALASARPQDVDSNRVVALPQDNFEVTDIGFEKIKAEPAPEVVNNDASYAYAVDISVPTTVSQMNCLKTSRYAAVFIRGFTPFGSGAFDTTSVTSIRNAYSAGLGIEVYMTPQPLSSLQGYQQLDALYNGLNGNGITIRSVWIQVTSPANWQKSATTNVNFLNSIISRAKQYGLTVGIYTNQYDWSQITGNWATLSSDVLLWYWHVLGGGVTGETPATFDDFRAFGSFKKASVKQFAQVESVCSLTVNRDVYVVGIPAAASSKNTDFFTQEDISSNNKKIVVGGVIGV</sequence>
<comment type="function">
    <text evidence="3 4">Involved in resistance to Gram-negative bacterium S.marcescens and to bacterium Gram-positive S.aureus infection.</text>
</comment>
<comment type="subcellular location">
    <subcellularLocation>
        <location evidence="3">Cytoplasmic vesicle lumen</location>
    </subcellularLocation>
    <text evidence="3">Localizes in vesicles in the apical region of intestinal cells.</text>
</comment>
<comment type="tissue specificity">
    <text evidence="3">Expressed in intestine, IL2 and IL6 neurons and some neurons in the head ganglia.</text>
</comment>
<comment type="induction">
    <text evidence="3 5">Induced by Gram-negative bacteria S.marcescens and B.thuringiensis infection.</text>
</comment>
<comment type="disruption phenotype">
    <text evidence="4">RNAi-mediated knockdown causes a reduction in survival in response to bacterium S.aureus infection.</text>
</comment>
<comment type="similarity">
    <text evidence="2 6">Belongs to the glycosyl hydrolase 25 family.</text>
</comment>
<comment type="caution">
    <text evidence="6">Lacks conserved active site residues, suggesting it has no catalytic activity.</text>
</comment>
<name>LYS1_CAEEL</name>
<accession>O62415</accession>